<name>LIP1_MALFU</name>
<feature type="signal peptide" evidence="3">
    <location>
        <begin position="1"/>
        <end position="26"/>
    </location>
</feature>
<feature type="chain" id="PRO_0000459492" description="Secreted triacylglycerol lipase LIP1">
    <location>
        <begin position="27"/>
        <end position="488"/>
    </location>
</feature>
<feature type="region of interest" description="Disordered" evidence="5">
    <location>
        <begin position="461"/>
        <end position="488"/>
    </location>
</feature>
<feature type="compositionally biased region" description="Basic residues" evidence="5">
    <location>
        <begin position="469"/>
        <end position="480"/>
    </location>
</feature>
<feature type="active site" description="Nucleophile" evidence="1">
    <location>
        <position position="201"/>
    </location>
</feature>
<feature type="active site" evidence="1">
    <location>
        <position position="348"/>
    </location>
</feature>
<feature type="active site" evidence="1">
    <location>
        <position position="382"/>
    </location>
</feature>
<feature type="glycosylation site" description="N-linked (GlcNAc...) asparagine" evidence="4">
    <location>
        <position position="183"/>
    </location>
</feature>
<feature type="glycosylation site" description="N-linked (GlcNAc...) asparagine" evidence="4">
    <location>
        <position position="316"/>
    </location>
</feature>
<feature type="disulfide bond" evidence="2">
    <location>
        <begin position="119"/>
        <end position="288"/>
    </location>
</feature>
<sequence length="488" mass="54357">MPSMLSLFYLAQSLFLLLLFPLYGHASVLKRGNNDPFYQPPAHWKSKQPGDILRWRKIEPKFIGGDFNVAEAYQLLYRTSQNTPNEPQHTVTTILVPHNAKKDILVVGSVAQDANGQQCTPSAGYTYNSESNFVFWLDETFFLQYLQEGYIMTIPDKEGPKNAFAAGRMEGYMTLDSIRATLNFSKLKLSSNTRIAGYGYSGGAITLGWASSLKPSYAPELNIIGWSFGGTPSNLLGTINHIDGTIFSGLILAGVTGVTDVYPEIHEYIQTVLNSAGREGLEFCRNHCLQEIILRYPLKSIYSYEFQTRGKDVFNNATVQQMFTDLTMGIRPHETPDVPVFMYHAQHDEIVPYDDAHKTAKAWCRNGAQVKFTTYSHYEMGHFTTEITGSVPAFHFIRDLFNGKEVSQGCDFKTEDTLFFNPSVLGGNANEIIDAILGIFGQRIGPEGRILAAKKTVVKGSKSGSSLKSHSHSQTHKHRKDVSTISNA</sequence>
<organism>
    <name type="scientific">Malassezia furfur</name>
    <name type="common">Pityriasis versicolor infection agent</name>
    <name type="synonym">Pityrosporum furfur</name>
    <dbReference type="NCBI Taxonomy" id="55194"/>
    <lineage>
        <taxon>Eukaryota</taxon>
        <taxon>Fungi</taxon>
        <taxon>Dikarya</taxon>
        <taxon>Basidiomycota</taxon>
        <taxon>Ustilaginomycotina</taxon>
        <taxon>Malasseziomycetes</taxon>
        <taxon>Malasseziales</taxon>
        <taxon>Malasseziaceae</taxon>
        <taxon>Malassezia</taxon>
    </lineage>
</organism>
<gene>
    <name evidence="8" type="primary">LIP1</name>
</gene>
<proteinExistence type="evidence at protein level"/>
<accession>Q2VG90</accession>
<protein>
    <recommendedName>
        <fullName evidence="8">Secreted triacylglycerol lipase LIP1</fullName>
        <ecNumber evidence="8">3.1.1.-</ecNumber>
        <ecNumber evidence="8">3.1.1.3</ecNumber>
    </recommendedName>
</protein>
<dbReference type="EC" id="3.1.1.-" evidence="8"/>
<dbReference type="EC" id="3.1.1.3" evidence="8"/>
<dbReference type="EMBL" id="DQ155666">
    <property type="protein sequence ID" value="AAZ85120.1"/>
    <property type="molecule type" value="Genomic_DNA"/>
</dbReference>
<dbReference type="SMR" id="Q2VG90"/>
<dbReference type="ESTHER" id="malfu-q2vg90">
    <property type="family name" value="Fungal-Bact_LIP"/>
</dbReference>
<dbReference type="GO" id="GO:0005576">
    <property type="term" value="C:extracellular region"/>
    <property type="evidence" value="ECO:0007669"/>
    <property type="project" value="UniProtKB-SubCell"/>
</dbReference>
<dbReference type="GO" id="GO:0004806">
    <property type="term" value="F:triacylglycerol lipase activity"/>
    <property type="evidence" value="ECO:0007669"/>
    <property type="project" value="InterPro"/>
</dbReference>
<dbReference type="GO" id="GO:0016042">
    <property type="term" value="P:lipid catabolic process"/>
    <property type="evidence" value="ECO:0007669"/>
    <property type="project" value="UniProtKB-KW"/>
</dbReference>
<dbReference type="Gene3D" id="1.10.260.130">
    <property type="match status" value="1"/>
</dbReference>
<dbReference type="Gene3D" id="3.40.50.1820">
    <property type="entry name" value="alpha/beta hydrolase"/>
    <property type="match status" value="1"/>
</dbReference>
<dbReference type="InterPro" id="IPR029058">
    <property type="entry name" value="AB_hydrolase_fold"/>
</dbReference>
<dbReference type="InterPro" id="IPR005152">
    <property type="entry name" value="Lipase_secreted"/>
</dbReference>
<dbReference type="PANTHER" id="PTHR34853">
    <property type="match status" value="1"/>
</dbReference>
<dbReference type="PANTHER" id="PTHR34853:SF1">
    <property type="entry name" value="LIPASE 5"/>
    <property type="match status" value="1"/>
</dbReference>
<dbReference type="Pfam" id="PF03583">
    <property type="entry name" value="LIP"/>
    <property type="match status" value="1"/>
</dbReference>
<dbReference type="SUPFAM" id="SSF53474">
    <property type="entry name" value="alpha/beta-Hydrolases"/>
    <property type="match status" value="1"/>
</dbReference>
<reference key="1">
    <citation type="journal article" date="2006" name="Microbiology">
        <title>MfLIP1, a gene encoding an extracellular lipase of the lipid-dependent fungus Malassezia furfur.</title>
        <authorList>
            <person name="Brunke S."/>
            <person name="Hube B."/>
        </authorList>
    </citation>
    <scope>NUCLEOTIDE SEQUENCE [GENOMIC DNA]</scope>
    <scope>FUNCTION</scope>
    <scope>CATALYTIC ACTIVITY</scope>
    <scope>BIOPHYSICOCHEMICAL PROPERTIES</scope>
    <scope>SUBCELLULAR LOCATION</scope>
    <source>
        <strain>CBS 1878</strain>
    </source>
</reference>
<reference key="2">
    <citation type="journal article" date="2020" name="Microbiology">
        <title>Ambient pH regulates secretion of lipases in Malassezia furfur.</title>
        <authorList>
            <person name="Juntachai W."/>
            <person name="Chaichompoo A."/>
            <person name="Chanarat S."/>
        </authorList>
    </citation>
    <scope>INDUCTION</scope>
</reference>
<evidence type="ECO:0000250" key="1">
    <source>
        <dbReference type="UniProtKB" id="A8QCW4"/>
    </source>
</evidence>
<evidence type="ECO:0000250" key="2">
    <source>
        <dbReference type="UniProtKB" id="W3VKA4"/>
    </source>
</evidence>
<evidence type="ECO:0000255" key="3"/>
<evidence type="ECO:0000255" key="4">
    <source>
        <dbReference type="PROSITE-ProRule" id="PRU00498"/>
    </source>
</evidence>
<evidence type="ECO:0000256" key="5">
    <source>
        <dbReference type="SAM" id="MobiDB-lite"/>
    </source>
</evidence>
<evidence type="ECO:0000269" key="6">
    <source>
    </source>
</evidence>
<evidence type="ECO:0000269" key="7">
    <source>
    </source>
</evidence>
<evidence type="ECO:0000303" key="8">
    <source>
    </source>
</evidence>
<evidence type="ECO:0000305" key="9"/>
<evidence type="ECO:0000305" key="10">
    <source>
    </source>
</evidence>
<keyword id="KW-1015">Disulfide bond</keyword>
<keyword id="KW-0325">Glycoprotein</keyword>
<keyword id="KW-0378">Hydrolase</keyword>
<keyword id="KW-0442">Lipid degradation</keyword>
<keyword id="KW-0443">Lipid metabolism</keyword>
<keyword id="KW-0964">Secreted</keyword>
<keyword id="KW-0732">Signal</keyword>
<keyword id="KW-0843">Virulence</keyword>
<comment type="function">
    <text evidence="6 10">Secreted lipase that releases free fatty acids from monoacylglycerol and triacylglycerol but has no phospholipase or lysophospholipase activities (PubMed:16436442). Has minor esterase activity (PubMed:16436442). Due to an absence of fatty acid synthase genes in Malassezia species, secretory lipases are essential for the yeast to generate free fatty acids from degradation of sebum and assimilate them as lipid sources for growth (Probable). Plays important roles not only in lipid metabolism but also in the immune response of host cells and pathogenesis (Probable). Hydrolyzes lipids, such as Tween 20, 40 and 80, with Tween 80 being the best substrate (PubMed:16436442).</text>
</comment>
<comment type="catalytic activity">
    <reaction evidence="6">
        <text>a triacylglycerol + H2O = a diacylglycerol + a fatty acid + H(+)</text>
        <dbReference type="Rhea" id="RHEA:12044"/>
        <dbReference type="ChEBI" id="CHEBI:15377"/>
        <dbReference type="ChEBI" id="CHEBI:15378"/>
        <dbReference type="ChEBI" id="CHEBI:17855"/>
        <dbReference type="ChEBI" id="CHEBI:18035"/>
        <dbReference type="ChEBI" id="CHEBI:28868"/>
        <dbReference type="EC" id="3.1.1.3"/>
    </reaction>
</comment>
<comment type="catalytic activity">
    <reaction evidence="6">
        <text>a monoacylglycerol + H2O = glycerol + a fatty acid + H(+)</text>
        <dbReference type="Rhea" id="RHEA:15245"/>
        <dbReference type="ChEBI" id="CHEBI:15377"/>
        <dbReference type="ChEBI" id="CHEBI:15378"/>
        <dbReference type="ChEBI" id="CHEBI:17408"/>
        <dbReference type="ChEBI" id="CHEBI:17754"/>
        <dbReference type="ChEBI" id="CHEBI:28868"/>
    </reaction>
</comment>
<comment type="catalytic activity">
    <reaction evidence="1">
        <text>a diacylglycerol + H2O = a monoacylglycerol + a fatty acid + H(+)</text>
        <dbReference type="Rhea" id="RHEA:32731"/>
        <dbReference type="ChEBI" id="CHEBI:15377"/>
        <dbReference type="ChEBI" id="CHEBI:15378"/>
        <dbReference type="ChEBI" id="CHEBI:17408"/>
        <dbReference type="ChEBI" id="CHEBI:18035"/>
        <dbReference type="ChEBI" id="CHEBI:28868"/>
    </reaction>
</comment>
<comment type="activity regulation">
    <text evidence="6">Inhibited by different metal ions including Fe(2+), Fe(3+), Cu(2+), and Zn(2+) (PubMed:16436442). The monovalent ions Na(+) and K(+) exhibit less dramatic inhibition (PubMed:16436442).</text>
</comment>
<comment type="biophysicochemical properties">
    <phDependence>
        <text evidence="6">Optimum pH is 5.8.</text>
    </phDependence>
    <temperatureDependence>
        <text evidence="6">Optimum temperature is 40 degrees Celsius.</text>
    </temperatureDependence>
</comment>
<comment type="subcellular location">
    <subcellularLocation>
        <location evidence="6">Secreted</location>
    </subcellularLocation>
</comment>
<comment type="induction">
    <text evidence="7">Not expressed in laboratory conditions.</text>
</comment>
<comment type="similarity">
    <text evidence="9">Belongs to the AB hydrolase superfamily. Lipase family. Class Lip subfamily.</text>
</comment>